<evidence type="ECO:0000250" key="1">
    <source>
        <dbReference type="UniProtKB" id="B2RY56"/>
    </source>
</evidence>
<evidence type="ECO:0000255" key="2">
    <source>
        <dbReference type="PROSITE-ProRule" id="PRU00176"/>
    </source>
</evidence>
<evidence type="ECO:0000255" key="3">
    <source>
        <dbReference type="PROSITE-ProRule" id="PRU00627"/>
    </source>
</evidence>
<evidence type="ECO:0000256" key="4">
    <source>
        <dbReference type="SAM" id="MobiDB-lite"/>
    </source>
</evidence>
<evidence type="ECO:0000269" key="5">
    <source>
    </source>
</evidence>
<evidence type="ECO:0000269" key="6">
    <source>
    </source>
</evidence>
<evidence type="ECO:0000269" key="7">
    <source>
    </source>
</evidence>
<evidence type="ECO:0000269" key="8">
    <source>
    </source>
</evidence>
<evidence type="ECO:0000269" key="9">
    <source>
    </source>
</evidence>
<evidence type="ECO:0000269" key="10">
    <source ref="6"/>
</evidence>
<evidence type="ECO:0000303" key="11">
    <source>
    </source>
</evidence>
<evidence type="ECO:0000303" key="12">
    <source>
    </source>
</evidence>
<evidence type="ECO:0000305" key="13"/>
<evidence type="ECO:0007744" key="14">
    <source>
    </source>
</evidence>
<evidence type="ECO:0007744" key="15">
    <source>
    </source>
</evidence>
<evidence type="ECO:0007744" key="16">
    <source>
    </source>
</evidence>
<evidence type="ECO:0007744" key="17">
    <source>
    </source>
</evidence>
<evidence type="ECO:0007744" key="18">
    <source>
    </source>
</evidence>
<evidence type="ECO:0007744" key="19">
    <source>
    </source>
</evidence>
<evidence type="ECO:0007744" key="20">
    <source>
    </source>
</evidence>
<evidence type="ECO:0007744" key="21">
    <source>
    </source>
</evidence>
<evidence type="ECO:0007744" key="22">
    <source>
    </source>
</evidence>
<evidence type="ECO:0007744" key="23">
    <source>
    </source>
</evidence>
<evidence type="ECO:0007829" key="24">
    <source>
        <dbReference type="PDB" id="3V53"/>
    </source>
</evidence>
<name>RBM25_HUMAN</name>
<organism>
    <name type="scientific">Homo sapiens</name>
    <name type="common">Human</name>
    <dbReference type="NCBI Taxonomy" id="9606"/>
    <lineage>
        <taxon>Eukaryota</taxon>
        <taxon>Metazoa</taxon>
        <taxon>Chordata</taxon>
        <taxon>Craniata</taxon>
        <taxon>Vertebrata</taxon>
        <taxon>Euteleostomi</taxon>
        <taxon>Mammalia</taxon>
        <taxon>Eutheria</taxon>
        <taxon>Euarchontoglires</taxon>
        <taxon>Primates</taxon>
        <taxon>Haplorrhini</taxon>
        <taxon>Catarrhini</taxon>
        <taxon>Hominidae</taxon>
        <taxon>Homo</taxon>
    </lineage>
</organism>
<protein>
    <recommendedName>
        <fullName>RNA-binding protein 25</fullName>
    </recommendedName>
    <alternativeName>
        <fullName>Arg/Glu/Asp-rich protein of 120 kDa</fullName>
        <shortName>RED120</shortName>
    </alternativeName>
    <alternativeName>
        <fullName>Protein S164</fullName>
    </alternativeName>
    <alternativeName>
        <fullName>RNA-binding motif protein 25</fullName>
    </alternativeName>
    <alternativeName>
        <fullName>RNA-binding region-containing protein 7</fullName>
    </alternativeName>
</protein>
<accession>P49756</accession>
<accession>A0PJL9</accession>
<accession>B2RNA8</accession>
<accession>B3KT03</accession>
<accession>Q2TA72</accession>
<accession>Q5XJ17</accession>
<accession>Q6P665</accession>
<accession>Q9H6A1</accession>
<accession>Q9UEQ5</accession>
<accession>Q9UIE9</accession>
<sequence length="843" mass="100185">MSFPPHLNRPPMGIPALPPGIPPPQFPGFPPPVPPGTPMIPVPMSIMAPAPTVLVPTVSMVGKHLGARKDHPGLKAKENDENCGPTTTVFVGNISEKASDMLIRQLLAKCGLVLSWKRVQGASGKLQAFGFCEYKEPESTLRALRLLHDLQIGEKKLLVKVDAKTKAQLDEWKAKKKASNGNARPETVTNDDEEALDEETKRRDQMIKGAIEVLIREYSSELNAPSQESDSHPRKKKKEKKEDIFRRFPVAPLIPYPLITKEDINAIEMEEDKRDLISREISKFRDTHKKLEEEKGKKEKERQEIEKERRERERERERERERREREREREREREREKEKERERERERDRDRDRTKERDRDRDRERDRDRDRERSSDRNKDRSRSREKSRDREREREREREREREREREREREREREREREREREREKDKKRDREEDEEDAYERRKLERKLREKEAAYQERLKNWEIRERKKTREYEKEAEREEERRREMAKEAKRLKEFLEDYDDDRDDPKYYRGSALQKRLRDREKEMEADERDRKREKEELEEIRQRLLAEGHPDPDAELQRMEQEAERRRQPQIKQEPESEEEEEEKQEKEEKREEPMEEEEEPEQKPCLKPTLRPISSAPSVSSASGNATPNTPGDESPCGIIIPHENSPDQQQPEEHRPKIGLSLKLGASNSPGQPNSVKRKKLPVDSVFNKFEDEDSDDVPRKRKLVPLDYGEDDKNATKGTVNTEEKRKHIKSLIEKIPTAKPELFAYPLDWSIVDSILMERRIRPWINKKIIEYIGEEEATLVDFVCSKVMAHSSPQSILDDVAMVLDEEAEVFIVKMWRLLIYETEAKKIGLVK</sequence>
<comment type="function">
    <text evidence="7 8">RNA-binding protein that acts as a regulator of alternative pre-mRNA splicing. Involved in apoptotic cell death through the regulation of the apoptotic factor BCL2L1 isoform expression. Modulates the ratio of proapoptotic BCL2L1 isoform S to antiapoptotic BCL2L1 isoform L mRNA expression. When overexpressed, stimulates proapoptotic BCL2L1 isoform S 5'-splice site (5'-ss) selection, whereas its depletion caused the accumulation of antiapoptotic BCL2L1 isoform L. Promotes BCL2L1 isoform S 5'-ss usage through the 5'-CGGGCA-3' RNA sequence. Its association with LUC7L3 promotes U1 snRNP binding to a weak 5' ss in a 5'-CGGGCA-3'-dependent manner. Binds to the exonic splicing enhancer 5'-CGGGCA-3' RNA sequence located within exon 2 of the BCL2L1 pre-mRNA. Also involved in the generation of an abnormal and truncated splice form of SCN5A in heart failure.</text>
</comment>
<comment type="subunit">
    <text evidence="6 7">Interacts with LUC7L3 and SRRM1. Specifically associates with functional splicing complexes, including Sm proteins and U1, U2, U4, U5 and U6 snRNAs. Associates with exon junction complex (EJC) proteins, including APEX1, DDX39B, NCBP1, RBM8A and RNPS1. Interaction with NCBP1 is RNA-dependent.</text>
</comment>
<comment type="interaction">
    <interactant intactId="EBI-2211856">
        <id>P49756</id>
    </interactant>
    <interactant intactId="EBI-618309">
        <id>Q08379</id>
        <label>GOLGA2</label>
    </interactant>
    <organismsDiffer>false</organismsDiffer>
    <experiments>3</experiments>
</comment>
<comment type="interaction">
    <interactant intactId="EBI-2211856">
        <id>P49756</id>
    </interactant>
    <interactant intactId="EBI-11062063">
        <id>O75417</id>
        <label>POLQ</label>
    </interactant>
    <organismsDiffer>false</organismsDiffer>
    <experiments>2</experiments>
</comment>
<comment type="interaction">
    <interactant intactId="EBI-2211856">
        <id>P49756</id>
    </interactant>
    <interactant intactId="EBI-473291">
        <id>O75400</id>
        <label>PRPF40A</label>
    </interactant>
    <organismsDiffer>false</organismsDiffer>
    <experiments>2</experiments>
</comment>
<comment type="interaction">
    <interactant intactId="EBI-2211856">
        <id>P49756</id>
    </interactant>
    <interactant intactId="EBI-3867173">
        <id>A7MD48</id>
        <label>SRRM4</label>
    </interactant>
    <organismsDiffer>false</organismsDiffer>
    <experiments>3</experiments>
</comment>
<comment type="subcellular location">
    <subcellularLocation>
        <location>Nucleus speckle</location>
    </subcellularLocation>
    <subcellularLocation>
        <location>Cytoplasm</location>
    </subcellularLocation>
    <text>Colocalizes predominantly, with SFRS2 and LUC7L3 splicing factors, in nuclear speckles. Cytoplasmic localization is faint.</text>
</comment>
<comment type="alternative products">
    <event type="alternative splicing"/>
    <isoform>
        <id>P49756-1</id>
        <name>1</name>
        <sequence type="displayed"/>
    </isoform>
    <isoform>
        <id>P49756-2</id>
        <name>2</name>
        <sequence type="described" ref="VSP_036792 VSP_036793"/>
    </isoform>
    <isoform>
        <id>P49756-3</id>
        <name>3</name>
        <sequence type="described" ref="VSP_036791 VSP_036794"/>
    </isoform>
    <isoform>
        <id>P49756-4</id>
        <name>4</name>
        <sequence type="described" ref="VSP_039881 VSP_039882"/>
    </isoform>
</comment>
<comment type="domain">
    <text>The PWI domain binds nucleic acids with significant help from its N-terminal flanking basic region. It has an equal preference for binding to single- or double-stranded species, and it contributes to RBM25 role in modulation of alternative splicing, maybe by mediating RNA-dependent association with LUC7L3.</text>
</comment>
<comment type="PTM">
    <text evidence="5">Sumoylated.</text>
</comment>
<comment type="miscellaneous">
    <molecule>Isoform 4</molecule>
    <text evidence="13">May be produced at very low levels due to a premature stop codon in the mRNA, leading to nonsense-mediated mRNA decay.</text>
</comment>
<comment type="sequence caution" evidence="13">
    <conflict type="erroneous initiation">
        <sequence resource="EMBL-CDS" id="AAH62440"/>
    </conflict>
    <text>Truncated N-terminus.</text>
</comment>
<comment type="sequence caution" evidence="13">
    <conflict type="miscellaneous discrepancy">
        <sequence resource="EMBL-CDS" id="AAH62440"/>
    </conflict>
    <text>Contaminating sequence. Potential poly-A sequence.</text>
</comment>
<comment type="sequence caution" evidence="13">
    <conflict type="erroneous initiation">
        <sequence resource="EMBL-CDS" id="AAH83496"/>
    </conflict>
    <text>Truncated N-terminus.</text>
</comment>
<comment type="sequence caution" evidence="13">
    <conflict type="erroneous translation">
        <sequence resource="EMBL-CDS" id="BAG52915"/>
    </conflict>
    <text>Wrong choice of CDS.</text>
</comment>
<keyword id="KW-0002">3D-structure</keyword>
<keyword id="KW-0007">Acetylation</keyword>
<keyword id="KW-0025">Alternative splicing</keyword>
<keyword id="KW-0963">Cytoplasm</keyword>
<keyword id="KW-0903">Direct protein sequencing</keyword>
<keyword id="KW-1017">Isopeptide bond</keyword>
<keyword id="KW-0507">mRNA processing</keyword>
<keyword id="KW-0508">mRNA splicing</keyword>
<keyword id="KW-0539">Nucleus</keyword>
<keyword id="KW-0597">Phosphoprotein</keyword>
<keyword id="KW-1267">Proteomics identification</keyword>
<keyword id="KW-1185">Reference proteome</keyword>
<keyword id="KW-0694">RNA-binding</keyword>
<keyword id="KW-0832">Ubl conjugation</keyword>
<reference key="1">
    <citation type="journal article" date="2004" name="Nat. Genet.">
        <title>Complete sequencing and characterization of 21,243 full-length human cDNAs.</title>
        <authorList>
            <person name="Ota T."/>
            <person name="Suzuki Y."/>
            <person name="Nishikawa T."/>
            <person name="Otsuki T."/>
            <person name="Sugiyama T."/>
            <person name="Irie R."/>
            <person name="Wakamatsu A."/>
            <person name="Hayashi K."/>
            <person name="Sato H."/>
            <person name="Nagai K."/>
            <person name="Kimura K."/>
            <person name="Makita H."/>
            <person name="Sekine M."/>
            <person name="Obayashi M."/>
            <person name="Nishi T."/>
            <person name="Shibahara T."/>
            <person name="Tanaka T."/>
            <person name="Ishii S."/>
            <person name="Yamamoto J."/>
            <person name="Saito K."/>
            <person name="Kawai Y."/>
            <person name="Isono Y."/>
            <person name="Nakamura Y."/>
            <person name="Nagahari K."/>
            <person name="Murakami K."/>
            <person name="Yasuda T."/>
            <person name="Iwayanagi T."/>
            <person name="Wagatsuma M."/>
            <person name="Shiratori A."/>
            <person name="Sudo H."/>
            <person name="Hosoiri T."/>
            <person name="Kaku Y."/>
            <person name="Kodaira H."/>
            <person name="Kondo H."/>
            <person name="Sugawara M."/>
            <person name="Takahashi M."/>
            <person name="Kanda K."/>
            <person name="Yokoi T."/>
            <person name="Furuya T."/>
            <person name="Kikkawa E."/>
            <person name="Omura Y."/>
            <person name="Abe K."/>
            <person name="Kamihara K."/>
            <person name="Katsuta N."/>
            <person name="Sato K."/>
            <person name="Tanikawa M."/>
            <person name="Yamazaki M."/>
            <person name="Ninomiya K."/>
            <person name="Ishibashi T."/>
            <person name="Yamashita H."/>
            <person name="Murakawa K."/>
            <person name="Fujimori K."/>
            <person name="Tanai H."/>
            <person name="Kimata M."/>
            <person name="Watanabe M."/>
            <person name="Hiraoka S."/>
            <person name="Chiba Y."/>
            <person name="Ishida S."/>
            <person name="Ono Y."/>
            <person name="Takiguchi S."/>
            <person name="Watanabe S."/>
            <person name="Yosida M."/>
            <person name="Hotuta T."/>
            <person name="Kusano J."/>
            <person name="Kanehori K."/>
            <person name="Takahashi-Fujii A."/>
            <person name="Hara H."/>
            <person name="Tanase T.-O."/>
            <person name="Nomura Y."/>
            <person name="Togiya S."/>
            <person name="Komai F."/>
            <person name="Hara R."/>
            <person name="Takeuchi K."/>
            <person name="Arita M."/>
            <person name="Imose N."/>
            <person name="Musashino K."/>
            <person name="Yuuki H."/>
            <person name="Oshima A."/>
            <person name="Sasaki N."/>
            <person name="Aotsuka S."/>
            <person name="Yoshikawa Y."/>
            <person name="Matsunawa H."/>
            <person name="Ichihara T."/>
            <person name="Shiohata N."/>
            <person name="Sano S."/>
            <person name="Moriya S."/>
            <person name="Momiyama H."/>
            <person name="Satoh N."/>
            <person name="Takami S."/>
            <person name="Terashima Y."/>
            <person name="Suzuki O."/>
            <person name="Nakagawa S."/>
            <person name="Senoh A."/>
            <person name="Mizoguchi H."/>
            <person name="Goto Y."/>
            <person name="Shimizu F."/>
            <person name="Wakebe H."/>
            <person name="Hishigaki H."/>
            <person name="Watanabe T."/>
            <person name="Sugiyama A."/>
            <person name="Takemoto M."/>
            <person name="Kawakami B."/>
            <person name="Yamazaki M."/>
            <person name="Watanabe K."/>
            <person name="Kumagai A."/>
            <person name="Itakura S."/>
            <person name="Fukuzumi Y."/>
            <person name="Fujimori Y."/>
            <person name="Komiyama M."/>
            <person name="Tashiro H."/>
            <person name="Tanigami A."/>
            <person name="Fujiwara T."/>
            <person name="Ono T."/>
            <person name="Yamada K."/>
            <person name="Fujii Y."/>
            <person name="Ozaki K."/>
            <person name="Hirao M."/>
            <person name="Ohmori Y."/>
            <person name="Kawabata A."/>
            <person name="Hikiji T."/>
            <person name="Kobatake N."/>
            <person name="Inagaki H."/>
            <person name="Ikema Y."/>
            <person name="Okamoto S."/>
            <person name="Okitani R."/>
            <person name="Kawakami T."/>
            <person name="Noguchi S."/>
            <person name="Itoh T."/>
            <person name="Shigeta K."/>
            <person name="Senba T."/>
            <person name="Matsumura K."/>
            <person name="Nakajima Y."/>
            <person name="Mizuno T."/>
            <person name="Morinaga M."/>
            <person name="Sasaki M."/>
            <person name="Togashi T."/>
            <person name="Oyama M."/>
            <person name="Hata H."/>
            <person name="Watanabe M."/>
            <person name="Komatsu T."/>
            <person name="Mizushima-Sugano J."/>
            <person name="Satoh T."/>
            <person name="Shirai Y."/>
            <person name="Takahashi Y."/>
            <person name="Nakagawa K."/>
            <person name="Okumura K."/>
            <person name="Nagase T."/>
            <person name="Nomura N."/>
            <person name="Kikuchi H."/>
            <person name="Masuho Y."/>
            <person name="Yamashita R."/>
            <person name="Nakai K."/>
            <person name="Yada T."/>
            <person name="Nakamura Y."/>
            <person name="Ohara O."/>
            <person name="Isogai T."/>
            <person name="Sugano S."/>
        </authorList>
    </citation>
    <scope>NUCLEOTIDE SEQUENCE [LARGE SCALE MRNA] (ISOFORM 4)</scope>
    <scope>NUCLEOTIDE SEQUENCE [LARGE SCALE MRNA] OF 1-430 (ISOFORM 1)</scope>
    <source>
        <tissue>Amygdala</tissue>
        <tissue>Kidney epithelium</tissue>
    </source>
</reference>
<reference key="2">
    <citation type="journal article" date="2003" name="Nature">
        <title>The DNA sequence and analysis of human chromosome 14.</title>
        <authorList>
            <person name="Heilig R."/>
            <person name="Eckenberg R."/>
            <person name="Petit J.-L."/>
            <person name="Fonknechten N."/>
            <person name="Da Silva C."/>
            <person name="Cattolico L."/>
            <person name="Levy M."/>
            <person name="Barbe V."/>
            <person name="De Berardinis V."/>
            <person name="Ureta-Vidal A."/>
            <person name="Pelletier E."/>
            <person name="Vico V."/>
            <person name="Anthouard V."/>
            <person name="Rowen L."/>
            <person name="Madan A."/>
            <person name="Qin S."/>
            <person name="Sun H."/>
            <person name="Du H."/>
            <person name="Pepin K."/>
            <person name="Artiguenave F."/>
            <person name="Robert C."/>
            <person name="Cruaud C."/>
            <person name="Bruels T."/>
            <person name="Jaillon O."/>
            <person name="Friedlander L."/>
            <person name="Samson G."/>
            <person name="Brottier P."/>
            <person name="Cure S."/>
            <person name="Segurens B."/>
            <person name="Aniere F."/>
            <person name="Samain S."/>
            <person name="Crespeau H."/>
            <person name="Abbasi N."/>
            <person name="Aiach N."/>
            <person name="Boscus D."/>
            <person name="Dickhoff R."/>
            <person name="Dors M."/>
            <person name="Dubois I."/>
            <person name="Friedman C."/>
            <person name="Gouyvenoux M."/>
            <person name="James R."/>
            <person name="Madan A."/>
            <person name="Mairey-Estrada B."/>
            <person name="Mangenot S."/>
            <person name="Martins N."/>
            <person name="Menard M."/>
            <person name="Oztas S."/>
            <person name="Ratcliffe A."/>
            <person name="Shaffer T."/>
            <person name="Trask B."/>
            <person name="Vacherie B."/>
            <person name="Bellemere C."/>
            <person name="Belser C."/>
            <person name="Besnard-Gonnet M."/>
            <person name="Bartol-Mavel D."/>
            <person name="Boutard M."/>
            <person name="Briez-Silla S."/>
            <person name="Combette S."/>
            <person name="Dufosse-Laurent V."/>
            <person name="Ferron C."/>
            <person name="Lechaplais C."/>
            <person name="Louesse C."/>
            <person name="Muselet D."/>
            <person name="Magdelenat G."/>
            <person name="Pateau E."/>
            <person name="Petit E."/>
            <person name="Sirvain-Trukniewicz P."/>
            <person name="Trybou A."/>
            <person name="Vega-Czarny N."/>
            <person name="Bataille E."/>
            <person name="Bluet E."/>
            <person name="Bordelais I."/>
            <person name="Dubois M."/>
            <person name="Dumont C."/>
            <person name="Guerin T."/>
            <person name="Haffray S."/>
            <person name="Hammadi R."/>
            <person name="Muanga J."/>
            <person name="Pellouin V."/>
            <person name="Robert D."/>
            <person name="Wunderle E."/>
            <person name="Gauguet G."/>
            <person name="Roy A."/>
            <person name="Sainte-Marthe L."/>
            <person name="Verdier J."/>
            <person name="Verdier-Discala C."/>
            <person name="Hillier L.W."/>
            <person name="Fulton L."/>
            <person name="McPherson J."/>
            <person name="Matsuda F."/>
            <person name="Wilson R."/>
            <person name="Scarpelli C."/>
            <person name="Gyapay G."/>
            <person name="Wincker P."/>
            <person name="Saurin W."/>
            <person name="Quetier F."/>
            <person name="Waterston R."/>
            <person name="Hood L."/>
            <person name="Weissenbach J."/>
        </authorList>
    </citation>
    <scope>NUCLEOTIDE SEQUENCE [LARGE SCALE GENOMIC DNA]</scope>
</reference>
<reference key="3">
    <citation type="submission" date="2005-07" db="EMBL/GenBank/DDBJ databases">
        <authorList>
            <person name="Mural R.J."/>
            <person name="Istrail S."/>
            <person name="Sutton G.G."/>
            <person name="Florea L."/>
            <person name="Halpern A.L."/>
            <person name="Mobarry C.M."/>
            <person name="Lippert R."/>
            <person name="Walenz B."/>
            <person name="Shatkay H."/>
            <person name="Dew I."/>
            <person name="Miller J.R."/>
            <person name="Flanigan M.J."/>
            <person name="Edwards N.J."/>
            <person name="Bolanos R."/>
            <person name="Fasulo D."/>
            <person name="Halldorsson B.V."/>
            <person name="Hannenhalli S."/>
            <person name="Turner R."/>
            <person name="Yooseph S."/>
            <person name="Lu F."/>
            <person name="Nusskern D.R."/>
            <person name="Shue B.C."/>
            <person name="Zheng X.H."/>
            <person name="Zhong F."/>
            <person name="Delcher A.L."/>
            <person name="Huson D.H."/>
            <person name="Kravitz S.A."/>
            <person name="Mouchard L."/>
            <person name="Reinert K."/>
            <person name="Remington K.A."/>
            <person name="Clark A.G."/>
            <person name="Waterman M.S."/>
            <person name="Eichler E.E."/>
            <person name="Adams M.D."/>
            <person name="Hunkapiller M.W."/>
            <person name="Myers E.W."/>
            <person name="Venter J.C."/>
        </authorList>
    </citation>
    <scope>NUCLEOTIDE SEQUENCE [LARGE SCALE GENOMIC DNA]</scope>
</reference>
<reference key="4">
    <citation type="journal article" date="2004" name="Genome Res.">
        <title>The status, quality, and expansion of the NIH full-length cDNA project: the Mammalian Gene Collection (MGC).</title>
        <authorList>
            <consortium name="The MGC Project Team"/>
        </authorList>
    </citation>
    <scope>NUCLEOTIDE SEQUENCE [LARGE SCALE MRNA] (ISOFORMS 1; 2 AND 3)</scope>
    <source>
        <tissue>Cerebellum</tissue>
        <tissue>Fetal brain</tissue>
        <tissue>Prostate</tissue>
        <tissue>Uterus</tissue>
    </source>
</reference>
<reference key="5">
    <citation type="submission" date="1998-11" db="EMBL/GenBank/DDBJ databases">
        <title>Complete sequence of the gene for presenilin 1.</title>
        <authorList>
            <person name="Rowen L."/>
            <person name="Madan A."/>
            <person name="Qin S."/>
            <person name="Abbasi N."/>
            <person name="Dors M."/>
            <person name="Ratcliffe A."/>
            <person name="Madan A."/>
            <person name="Dickhoff R."/>
            <person name="Shaffer T."/>
            <person name="James R."/>
            <person name="Lasky S."/>
            <person name="Hood L."/>
        </authorList>
    </citation>
    <scope>NUCLEOTIDE SEQUENCE [GENOMIC DNA] OF 109-843</scope>
</reference>
<reference key="6">
    <citation type="submission" date="2008-12" db="UniProtKB">
        <authorList>
            <person name="Bienvenut W.V."/>
            <person name="Lilla S."/>
            <person name="von Kriegsheim A."/>
            <person name="Lempens A."/>
            <person name="Kolch W."/>
        </authorList>
    </citation>
    <scope>PROTEIN SEQUENCE OF 146-155; 209-216 AND 672-685</scope>
    <scope>PHOSPHORYLATION AT SER-677</scope>
    <scope>IDENTIFICATION BY MASS SPECTROMETRY</scope>
    <source>
        <tissue>Ovarian carcinoma</tissue>
    </source>
</reference>
<reference key="7">
    <citation type="journal article" date="2007" name="FEBS Lett.">
        <title>Identification and characterization of RED120: a conserved PWI domain protein with links to splicing and 3'-end formation.</title>
        <authorList>
            <person name="Fortes P."/>
            <person name="Longman D."/>
            <person name="McCracken S."/>
            <person name="Ip J.Y."/>
            <person name="Poot R."/>
            <person name="Mattaj I.W."/>
            <person name="Caceres J.F."/>
            <person name="Blencowe B.J."/>
        </authorList>
    </citation>
    <scope>PROTEIN SEQUENCE OF 146-155 AND 247-261</scope>
    <scope>SUBCELLULAR LOCATION</scope>
    <scope>INTERACTION WITH APEX1; DDX39B; NCBP1; RBM8; RNPS1 AND SRRM1</scope>
</reference>
<reference key="8">
    <citation type="journal article" date="1995" name="Nature">
        <title>Cloning of a gene bearing missense mutations in early-onset familial Alzheimer's disease.</title>
        <authorList>
            <person name="Sherrington R."/>
            <person name="Rogaev E.I."/>
            <person name="Liang Y."/>
            <person name="Rogaeva E.A."/>
            <person name="Levesque G."/>
            <person name="Ikeda M."/>
            <person name="Chi H."/>
            <person name="Lin C."/>
            <person name="Li G."/>
            <person name="Holman K."/>
            <person name="Tsuda T."/>
            <person name="Mar L."/>
            <person name="Foncin J.-F."/>
            <person name="Bruni A.C."/>
            <person name="Montesi M.P."/>
            <person name="Sorbi S."/>
            <person name="Rainero I."/>
            <person name="Pinessi L."/>
            <person name="Nee L."/>
            <person name="Chumakov I."/>
            <person name="Pollen D."/>
            <person name="Brookes A."/>
            <person name="Sanseau P."/>
            <person name="Polinsky R.J."/>
            <person name="Wasco W."/>
            <person name="da Silva H.A.R."/>
            <person name="Haines J.L."/>
            <person name="Pericak-Vance M.A."/>
            <person name="Tanzi R.E."/>
            <person name="Roses A.D."/>
            <person name="Fraser P.E."/>
            <person name="Rommens J.M."/>
            <person name="St George-Hyslop P.H."/>
        </authorList>
    </citation>
    <scope>NUCLEOTIDE SEQUENCE [MRNA] OF 571-843</scope>
    <source>
        <tissue>Brain</tissue>
    </source>
</reference>
<reference key="9">
    <citation type="journal article" date="2005" name="J. Biol. Chem.">
        <title>Systematic identification and analysis of mammalian small ubiquitin-like modifier substrates.</title>
        <authorList>
            <person name="Gocke C.B."/>
            <person name="Yu H."/>
            <person name="Kang J."/>
        </authorList>
    </citation>
    <scope>SUMOYLATION</scope>
</reference>
<reference key="10">
    <citation type="journal article" date="2006" name="Cell">
        <title>Global, in vivo, and site-specific phosphorylation dynamics in signaling networks.</title>
        <authorList>
            <person name="Olsen J.V."/>
            <person name="Blagoev B."/>
            <person name="Gnad F."/>
            <person name="Macek B."/>
            <person name="Kumar C."/>
            <person name="Mortensen P."/>
            <person name="Mann M."/>
        </authorList>
    </citation>
    <scope>IDENTIFICATION BY MASS SPECTROMETRY [LARGE SCALE ANALYSIS]</scope>
    <source>
        <tissue>Cervix carcinoma</tissue>
    </source>
</reference>
<reference key="11">
    <citation type="journal article" date="2006" name="Nat. Biotechnol.">
        <title>A probability-based approach for high-throughput protein phosphorylation analysis and site localization.</title>
        <authorList>
            <person name="Beausoleil S.A."/>
            <person name="Villen J."/>
            <person name="Gerber S.A."/>
            <person name="Rush J."/>
            <person name="Gygi S.P."/>
        </authorList>
    </citation>
    <scope>PHOSPHORYLATION [LARGE SCALE ANALYSIS] AT SER-677 AND SER-683</scope>
    <scope>IDENTIFICATION BY MASS SPECTROMETRY [LARGE SCALE ANALYSIS]</scope>
    <source>
        <tissue>Cervix carcinoma</tissue>
    </source>
</reference>
<reference key="12">
    <citation type="journal article" date="2008" name="J. Proteome Res.">
        <title>Phosphorylation analysis of primary human T lymphocytes using sequential IMAC and titanium oxide enrichment.</title>
        <authorList>
            <person name="Carrascal M."/>
            <person name="Ovelleiro D."/>
            <person name="Casas V."/>
            <person name="Gay M."/>
            <person name="Abian J."/>
        </authorList>
    </citation>
    <scope>IDENTIFICATION BY MASS SPECTROMETRY [LARGE SCALE ANALYSIS]</scope>
    <source>
        <tissue>T-cell</tissue>
    </source>
</reference>
<reference key="13">
    <citation type="journal article" date="2008" name="Mol. Cell. Biol.">
        <title>Novel splicing factor RBM25 modulates Bcl-x pre-mRNA 5' splice site selection.</title>
        <authorList>
            <person name="Zhou A."/>
            <person name="Ou A.C."/>
            <person name="Cho A."/>
            <person name="Benz E.J. Jr."/>
            <person name="Huang S.C."/>
        </authorList>
    </citation>
    <scope>FUNCTION</scope>
    <scope>INTERACTION WITH LUC7L3</scope>
    <scope>SUBCELLULAR LOCATION</scope>
</reference>
<reference key="14">
    <citation type="journal article" date="2008" name="Proc. Natl. Acad. Sci. U.S.A.">
        <title>A quantitative atlas of mitotic phosphorylation.</title>
        <authorList>
            <person name="Dephoure N."/>
            <person name="Zhou C."/>
            <person name="Villen J."/>
            <person name="Beausoleil S.A."/>
            <person name="Bakalarski C.E."/>
            <person name="Elledge S.J."/>
            <person name="Gygi S.P."/>
        </authorList>
    </citation>
    <scope>PHOSPHORYLATION [LARGE SCALE ANALYSIS] AT SER-703</scope>
    <scope>IDENTIFICATION BY MASS SPECTROMETRY [LARGE SCALE ANALYSIS]</scope>
    <source>
        <tissue>Cervix carcinoma</tissue>
    </source>
</reference>
<reference key="15">
    <citation type="journal article" date="2009" name="Anal. Chem.">
        <title>Lys-N and trypsin cover complementary parts of the phosphoproteome in a refined SCX-based approach.</title>
        <authorList>
            <person name="Gauci S."/>
            <person name="Helbig A.O."/>
            <person name="Slijper M."/>
            <person name="Krijgsveld J."/>
            <person name="Heck A.J."/>
            <person name="Mohammed S."/>
        </authorList>
    </citation>
    <scope>IDENTIFICATION BY MASS SPECTROMETRY [LARGE SCALE ANALYSIS]</scope>
</reference>
<reference key="16">
    <citation type="journal article" date="2009" name="Sci. Signal.">
        <title>Quantitative phosphoproteomic analysis of T cell receptor signaling reveals system-wide modulation of protein-protein interactions.</title>
        <authorList>
            <person name="Mayya V."/>
            <person name="Lundgren D.H."/>
            <person name="Hwang S.-I."/>
            <person name="Rezaul K."/>
            <person name="Wu L."/>
            <person name="Eng J.K."/>
            <person name="Rodionov V."/>
            <person name="Han D.K."/>
        </authorList>
    </citation>
    <scope>PHOSPHORYLATION [LARGE SCALE ANALYSIS] AT SER-677</scope>
    <scope>IDENTIFICATION BY MASS SPECTROMETRY [LARGE SCALE ANALYSIS]</scope>
    <source>
        <tissue>Leukemic T-cell</tissue>
    </source>
</reference>
<reference key="17">
    <citation type="journal article" date="2010" name="Sci. Signal.">
        <title>Quantitative phosphoproteomics reveals widespread full phosphorylation site occupancy during mitosis.</title>
        <authorList>
            <person name="Olsen J.V."/>
            <person name="Vermeulen M."/>
            <person name="Santamaria A."/>
            <person name="Kumar C."/>
            <person name="Miller M.L."/>
            <person name="Jensen L.J."/>
            <person name="Gnad F."/>
            <person name="Cox J."/>
            <person name="Jensen T.S."/>
            <person name="Nigg E.A."/>
            <person name="Brunak S."/>
            <person name="Mann M."/>
        </authorList>
    </citation>
    <scope>PHOSPHORYLATION [LARGE SCALE ANALYSIS] AT SER-583; SER-677; SER-683 AND SER-703</scope>
    <scope>IDENTIFICATION BY MASS SPECTROMETRY [LARGE SCALE ANALYSIS]</scope>
    <source>
        <tissue>Cervix carcinoma</tissue>
    </source>
</reference>
<reference key="18">
    <citation type="journal article" date="2011" name="BMC Syst. Biol.">
        <title>Initial characterization of the human central proteome.</title>
        <authorList>
            <person name="Burkard T.R."/>
            <person name="Planyavsky M."/>
            <person name="Kaupe I."/>
            <person name="Breitwieser F.P."/>
            <person name="Buerckstuemmer T."/>
            <person name="Bennett K.L."/>
            <person name="Superti-Furga G."/>
            <person name="Colinge J."/>
        </authorList>
    </citation>
    <scope>IDENTIFICATION BY MASS SPECTROMETRY [LARGE SCALE ANALYSIS]</scope>
</reference>
<reference key="19">
    <citation type="journal article" date="2011" name="Circulation">
        <title>Role of RBM25/LUC7L3 in abnormal cardiac sodium channel splicing regulation in human heart failure.</title>
        <authorList>
            <person name="Gao G."/>
            <person name="Xie A."/>
            <person name="Huang S.C."/>
            <person name="Zhou A."/>
            <person name="Zhang J."/>
            <person name="Herman A.M."/>
            <person name="Ghassemzadeh S."/>
            <person name="Jeong E.M."/>
            <person name="Kasturirangan S."/>
            <person name="Raicu M."/>
            <person name="Sobieski M.A. II"/>
            <person name="Bhat G."/>
            <person name="Tatooles A."/>
            <person name="Benz E.J. Jr."/>
            <person name="Kamp T.J."/>
            <person name="Dudley S.C. Jr."/>
        </authorList>
    </citation>
    <scope>FUNCTION</scope>
</reference>
<reference key="20">
    <citation type="journal article" date="2011" name="Sci. Signal.">
        <title>System-wide temporal characterization of the proteome and phosphoproteome of human embryonic stem cell differentiation.</title>
        <authorList>
            <person name="Rigbolt K.T."/>
            <person name="Prokhorova T.A."/>
            <person name="Akimov V."/>
            <person name="Henningsen J."/>
            <person name="Johansen P.T."/>
            <person name="Kratchmarova I."/>
            <person name="Kassem M."/>
            <person name="Mann M."/>
            <person name="Olsen J.V."/>
            <person name="Blagoev B."/>
        </authorList>
    </citation>
    <scope>PHOSPHORYLATION [LARGE SCALE ANALYSIS] AT SER-677; SER-683 AND SER-703</scope>
    <scope>IDENTIFICATION BY MASS SPECTROMETRY [LARGE SCALE ANALYSIS]</scope>
</reference>
<reference key="21">
    <citation type="journal article" date="2013" name="J. Proteome Res.">
        <title>Toward a comprehensive characterization of a human cancer cell phosphoproteome.</title>
        <authorList>
            <person name="Zhou H."/>
            <person name="Di Palma S."/>
            <person name="Preisinger C."/>
            <person name="Peng M."/>
            <person name="Polat A.N."/>
            <person name="Heck A.J."/>
            <person name="Mohammed S."/>
        </authorList>
    </citation>
    <scope>PHOSPHORYLATION [LARGE SCALE ANALYSIS] AT SER-226; SER-229; SER-583; SER-677; SER-683 AND SER-703</scope>
    <scope>IDENTIFICATION BY MASS SPECTROMETRY [LARGE SCALE ANALYSIS]</scope>
    <source>
        <tissue>Cervix carcinoma</tissue>
        <tissue>Erythroleukemia</tissue>
    </source>
</reference>
<reference key="22">
    <citation type="journal article" date="2014" name="J. Proteomics">
        <title>An enzyme assisted RP-RPLC approach for in-depth analysis of human liver phosphoproteome.</title>
        <authorList>
            <person name="Bian Y."/>
            <person name="Song C."/>
            <person name="Cheng K."/>
            <person name="Dong M."/>
            <person name="Wang F."/>
            <person name="Huang J."/>
            <person name="Sun D."/>
            <person name="Wang L."/>
            <person name="Ye M."/>
            <person name="Zou H."/>
        </authorList>
    </citation>
    <scope>PHOSPHORYLATION [LARGE SCALE ANALYSIS] AT SER-677</scope>
    <scope>IDENTIFICATION BY MASS SPECTROMETRY [LARGE SCALE ANALYSIS]</scope>
    <source>
        <tissue>Liver</tissue>
    </source>
</reference>
<reference key="23">
    <citation type="journal article" date="2014" name="Nat. Struct. Mol. Biol.">
        <title>Uncovering global SUMOylation signaling networks in a site-specific manner.</title>
        <authorList>
            <person name="Hendriks I.A."/>
            <person name="D'Souza R.C."/>
            <person name="Yang B."/>
            <person name="Verlaan-de Vries M."/>
            <person name="Mann M."/>
            <person name="Vertegaal A.C."/>
        </authorList>
    </citation>
    <scope>SUMOYLATION [LARGE SCALE ANALYSIS] AT LYS-578</scope>
    <scope>IDENTIFICATION BY MASS SPECTROMETRY [LARGE SCALE ANALYSIS]</scope>
</reference>
<reference key="24">
    <citation type="journal article" date="2015" name="Mol. Cell. Proteomics">
        <title>System-wide analysis of SUMOylation dynamics in response to replication stress reveals novel small ubiquitin-like modified target proteins and acceptor lysines relevant for genome stability.</title>
        <authorList>
            <person name="Xiao Z."/>
            <person name="Chang J.G."/>
            <person name="Hendriks I.A."/>
            <person name="Sigurdsson J.O."/>
            <person name="Olsen J.V."/>
            <person name="Vertegaal A.C."/>
        </authorList>
    </citation>
    <scope>SUMOYLATION [LARGE SCALE ANALYSIS] AT LYS-273 AND LYS-578</scope>
    <scope>IDENTIFICATION BY MASS SPECTROMETRY [LARGE SCALE ANALYSIS]</scope>
</reference>
<reference key="25">
    <citation type="journal article" date="2017" name="Nat. Struct. Mol. Biol.">
        <title>Site-specific mapping of the human SUMO proteome reveals co-modification with phosphorylation.</title>
        <authorList>
            <person name="Hendriks I.A."/>
            <person name="Lyon D."/>
            <person name="Young C."/>
            <person name="Jensen L.J."/>
            <person name="Vertegaal A.C."/>
            <person name="Nielsen M.L."/>
        </authorList>
    </citation>
    <scope>SUMOYLATION [LARGE SCALE ANALYSIS] AT LYS-261; LYS-273; LYS-430; LYS-578; LYS-671; LYS-688; LYS-697 AND LYS-722</scope>
    <scope>IDENTIFICATION BY MASS SPECTROMETRY [LARGE SCALE ANALYSIS]</scope>
</reference>
<reference key="26">
    <citation type="journal article" date="2013" name="Biochem. J.">
        <title>Crystal structure and functional characterization of the human RBM25 PWI domain and its flanking basic region.</title>
        <authorList>
            <person name="Gong D."/>
            <person name="Yang F."/>
            <person name="Li F."/>
            <person name="Qian D."/>
            <person name="Wu M."/>
            <person name="Shao Z."/>
            <person name="Wu M."/>
            <person name="Wu J."/>
            <person name="Shi Y."/>
        </authorList>
    </citation>
    <scope>X-RAY CRYSTALLOGRAPHY (2.9 ANGSTROMS) OF 734-843</scope>
    <scope>PWI DOMAIN</scope>
    <scope>MUTAGENESIS OF 734-LYS--LYS-736; 777-LYS-LYS-778; LYS-825 AND ARG-828</scope>
</reference>
<feature type="chain" id="PRO_0000081784" description="RNA-binding protein 25">
    <location>
        <begin position="1"/>
        <end position="843"/>
    </location>
</feature>
<feature type="domain" description="RRM" evidence="2">
    <location>
        <begin position="87"/>
        <end position="164"/>
    </location>
</feature>
<feature type="domain" description="PWI" evidence="3">
    <location>
        <begin position="750"/>
        <end position="843"/>
    </location>
</feature>
<feature type="region of interest" description="Disordered" evidence="4">
    <location>
        <begin position="1"/>
        <end position="30"/>
    </location>
</feature>
<feature type="region of interest" description="Disordered" evidence="4">
    <location>
        <begin position="171"/>
        <end position="202"/>
    </location>
</feature>
<feature type="region of interest" description="Disordered" evidence="4">
    <location>
        <begin position="219"/>
        <end position="243"/>
    </location>
</feature>
<feature type="region of interest" description="Disordered" evidence="4">
    <location>
        <begin position="280"/>
        <end position="442"/>
    </location>
</feature>
<feature type="region of interest" description="Necessary for nuclear speckle localization">
    <location>
        <begin position="285"/>
        <end position="644"/>
    </location>
</feature>
<feature type="region of interest" description="Disordered" evidence="4">
    <location>
        <begin position="498"/>
        <end position="688"/>
    </location>
</feature>
<feature type="compositionally biased region" description="Pro residues" evidence="4">
    <location>
        <begin position="12"/>
        <end position="30"/>
    </location>
</feature>
<feature type="compositionally biased region" description="Basic and acidic residues" evidence="4">
    <location>
        <begin position="280"/>
        <end position="433"/>
    </location>
</feature>
<feature type="compositionally biased region" description="Basic and acidic residues" evidence="4">
    <location>
        <begin position="521"/>
        <end position="573"/>
    </location>
</feature>
<feature type="compositionally biased region" description="Basic and acidic residues" evidence="4">
    <location>
        <begin position="590"/>
        <end position="599"/>
    </location>
</feature>
<feature type="compositionally biased region" description="Low complexity" evidence="4">
    <location>
        <begin position="621"/>
        <end position="630"/>
    </location>
</feature>
<feature type="compositionally biased region" description="Polar residues" evidence="4">
    <location>
        <begin position="674"/>
        <end position="683"/>
    </location>
</feature>
<feature type="modified residue" description="N6-acetyllysine" evidence="1">
    <location>
        <position position="135"/>
    </location>
</feature>
<feature type="modified residue" description="Phosphoserine" evidence="19">
    <location>
        <position position="226"/>
    </location>
</feature>
<feature type="modified residue" description="Phosphoserine" evidence="19">
    <location>
        <position position="229"/>
    </location>
</feature>
<feature type="modified residue" description="Phosphoserine" evidence="17 19">
    <location>
        <position position="583"/>
    </location>
</feature>
<feature type="modified residue" description="Phosphoserine" evidence="10 14 16 17 18 19 20">
    <location>
        <position position="677"/>
    </location>
</feature>
<feature type="modified residue" description="Phosphoserine" evidence="14 17 18 19">
    <location>
        <position position="683"/>
    </location>
</feature>
<feature type="modified residue" description="Phosphoserine" evidence="15 17 18 19">
    <location>
        <position position="703"/>
    </location>
</feature>
<feature type="cross-link" description="Glycyl lysine isopeptide (Lys-Gly) (interchain with G-Cter in SUMO2)" evidence="23">
    <location>
        <position position="261"/>
    </location>
</feature>
<feature type="cross-link" description="Glycyl lysine isopeptide (Lys-Gly) (interchain with G-Cter in SUMO2)" evidence="22 23">
    <location>
        <position position="273"/>
    </location>
</feature>
<feature type="cross-link" description="Glycyl lysine isopeptide (Lys-Gly) (interchain with G-Cter in SUMO2)" evidence="23">
    <location>
        <position position="430"/>
    </location>
</feature>
<feature type="cross-link" description="Glycyl lysine isopeptide (Lys-Gly) (interchain with G-Cter in SUMO2)" evidence="21 22 23">
    <location>
        <position position="578"/>
    </location>
</feature>
<feature type="cross-link" description="Glycyl lysine isopeptide (Lys-Gly) (interchain with G-Cter in SUMO2)" evidence="23">
    <location>
        <position position="671"/>
    </location>
</feature>
<feature type="cross-link" description="Glycyl lysine isopeptide (Lys-Gly) (interchain with G-Cter in SUMO2)" evidence="23">
    <location>
        <position position="688"/>
    </location>
</feature>
<feature type="cross-link" description="Glycyl lysine isopeptide (Lys-Gly) (interchain with G-Cter in SUMO2)" evidence="23">
    <location>
        <position position="697"/>
    </location>
</feature>
<feature type="cross-link" description="Glycyl lysine isopeptide (Lys-Gly) (interchain with G-Cter in SUMO2)" evidence="23">
    <location>
        <position position="722"/>
    </location>
</feature>
<feature type="splice variant" id="VSP_039881" description="In isoform 4." evidence="11">
    <original>KCGLVLSWKRVQGASGKLQAFGFCEYKEPESTLRALRLLHDLQIGEKKLLVKVDAK</original>
    <variation>PSDSVSTRSQNLPSVHSDYYMTCKLERKSYSLKLMQRQRHSWMNGKQRRKLLMGLG</variation>
    <location>
        <begin position="109"/>
        <end position="164"/>
    </location>
</feature>
<feature type="splice variant" id="VSP_039882" description="In isoform 4." evidence="11">
    <location>
        <begin position="165"/>
        <end position="843"/>
    </location>
</feature>
<feature type="splice variant" id="VSP_036791" description="In isoform 3." evidence="12">
    <original>KLEEEKGKKEK</original>
    <variation>VVFLSFHLIPI</variation>
    <location>
        <begin position="290"/>
        <end position="300"/>
    </location>
</feature>
<feature type="splice variant" id="VSP_036792" description="In isoform 2." evidence="12">
    <original>KLEEE</original>
    <variation>RSYGD</variation>
    <location>
        <begin position="290"/>
        <end position="294"/>
    </location>
</feature>
<feature type="splice variant" id="VSP_036793" description="In isoform 2." evidence="12">
    <location>
        <begin position="295"/>
        <end position="843"/>
    </location>
</feature>
<feature type="splice variant" id="VSP_036794" description="In isoform 3." evidence="12">
    <location>
        <begin position="301"/>
        <end position="843"/>
    </location>
</feature>
<feature type="mutagenesis site" description="Reduced DNA/RNA binding." evidence="9">
    <original>KRK</original>
    <variation>AAA</variation>
    <location>
        <begin position="734"/>
        <end position="736"/>
    </location>
</feature>
<feature type="mutagenesis site" description="Reduced DNA/RNA binding." evidence="9">
    <original>KK</original>
    <variation>AA</variation>
    <location>
        <begin position="777"/>
        <end position="778"/>
    </location>
</feature>
<feature type="mutagenesis site" description="Reduced DNA/RNA binding; when associated with A-828." evidence="9">
    <original>K</original>
    <variation>A</variation>
    <location>
        <position position="825"/>
    </location>
</feature>
<feature type="mutagenesis site" description="Reduced DNA/RNA binding; when associated with A-825." evidence="9">
    <original>R</original>
    <variation>A</variation>
    <location>
        <position position="828"/>
    </location>
</feature>
<feature type="sequence conflict" description="In Ref. 1; BAB15362." evidence="13" ref="1">
    <original>D</original>
    <variation>K</variation>
    <location>
        <position position="428"/>
    </location>
</feature>
<feature type="sequence conflict" description="In Ref. 8; AAC41999." evidence="13" ref="8">
    <original>RRRQ</original>
    <variation>EAQE</variation>
    <location>
        <begin position="571"/>
        <end position="574"/>
    </location>
</feature>
<feature type="helix" evidence="24">
    <location>
        <begin position="739"/>
        <end position="744"/>
    </location>
</feature>
<feature type="helix" evidence="24">
    <location>
        <begin position="749"/>
        <end position="754"/>
    </location>
</feature>
<feature type="turn" evidence="24">
    <location>
        <begin position="759"/>
        <end position="761"/>
    </location>
</feature>
<feature type="helix" evidence="24">
    <location>
        <begin position="764"/>
        <end position="769"/>
    </location>
</feature>
<feature type="helix" evidence="24">
    <location>
        <begin position="771"/>
        <end position="782"/>
    </location>
</feature>
<feature type="helix" evidence="24">
    <location>
        <begin position="789"/>
        <end position="799"/>
    </location>
</feature>
<feature type="helix" evidence="24">
    <location>
        <begin position="804"/>
        <end position="815"/>
    </location>
</feature>
<feature type="helix" evidence="24">
    <location>
        <begin position="818"/>
        <end position="839"/>
    </location>
</feature>
<proteinExistence type="evidence at protein level"/>
<gene>
    <name type="primary">RBM25</name>
    <name type="synonym">RNPC7</name>
</gene>
<dbReference type="EMBL" id="AK026107">
    <property type="protein sequence ID" value="BAB15362.1"/>
    <property type="molecule type" value="mRNA"/>
</dbReference>
<dbReference type="EMBL" id="AK094697">
    <property type="protein sequence ID" value="BAG52915.1"/>
    <property type="status" value="ALT_SEQ"/>
    <property type="molecule type" value="mRNA"/>
</dbReference>
<dbReference type="EMBL" id="AL442663">
    <property type="status" value="NOT_ANNOTATED_CDS"/>
    <property type="molecule type" value="Genomic_DNA"/>
</dbReference>
<dbReference type="EMBL" id="AC004858">
    <property type="protein sequence ID" value="AAF19255.1"/>
    <property type="molecule type" value="Genomic_DNA"/>
</dbReference>
<dbReference type="EMBL" id="CH471061">
    <property type="protein sequence ID" value="EAW81087.1"/>
    <property type="molecule type" value="Genomic_DNA"/>
</dbReference>
<dbReference type="EMBL" id="BC062440">
    <property type="protein sequence ID" value="AAH62440.1"/>
    <property type="status" value="ALT_SEQ"/>
    <property type="molecule type" value="mRNA"/>
</dbReference>
<dbReference type="EMBL" id="BC083496">
    <property type="protein sequence ID" value="AAH83496.1"/>
    <property type="status" value="ALT_INIT"/>
    <property type="molecule type" value="mRNA"/>
</dbReference>
<dbReference type="EMBL" id="BC111066">
    <property type="protein sequence ID" value="AAI11067.1"/>
    <property type="molecule type" value="mRNA"/>
</dbReference>
<dbReference type="EMBL" id="BC113389">
    <property type="protein sequence ID" value="AAI13390.1"/>
    <property type="molecule type" value="mRNA"/>
</dbReference>
<dbReference type="EMBL" id="BC113391">
    <property type="protein sequence ID" value="AAI13392.1"/>
    <property type="molecule type" value="mRNA"/>
</dbReference>
<dbReference type="EMBL" id="BC136775">
    <property type="protein sequence ID" value="AAI36776.1"/>
    <property type="molecule type" value="mRNA"/>
</dbReference>
<dbReference type="EMBL" id="BC136776">
    <property type="protein sequence ID" value="AAI36777.1"/>
    <property type="molecule type" value="mRNA"/>
</dbReference>
<dbReference type="EMBL" id="BC144407">
    <property type="protein sequence ID" value="AAI44408.1"/>
    <property type="molecule type" value="mRNA"/>
</dbReference>
<dbReference type="EMBL" id="AF109907">
    <property type="protein sequence ID" value="AAC97961.1"/>
    <property type="molecule type" value="Genomic_DNA"/>
</dbReference>
<dbReference type="EMBL" id="L40392">
    <property type="protein sequence ID" value="AAC41999.1"/>
    <property type="molecule type" value="mRNA"/>
</dbReference>
<dbReference type="CCDS" id="CCDS32113.1">
    <molecule id="P49756-1"/>
</dbReference>
<dbReference type="RefSeq" id="NP_067062.1">
    <molecule id="P49756-1"/>
    <property type="nucleotide sequence ID" value="NM_021239.3"/>
</dbReference>
<dbReference type="RefSeq" id="XP_011535346.1">
    <molecule id="P49756-1"/>
    <property type="nucleotide sequence ID" value="XM_011537044.4"/>
</dbReference>
<dbReference type="RefSeq" id="XP_011535347.1">
    <property type="nucleotide sequence ID" value="XM_011537045.2"/>
</dbReference>
<dbReference type="RefSeq" id="XP_054232491.1">
    <molecule id="P49756-1"/>
    <property type="nucleotide sequence ID" value="XM_054376516.1"/>
</dbReference>
<dbReference type="PDB" id="3V53">
    <property type="method" value="X-ray"/>
    <property type="resolution" value="2.90 A"/>
    <property type="chains" value="A/B/C/D/E=734-843"/>
</dbReference>
<dbReference type="PDBsum" id="3V53"/>
<dbReference type="SMR" id="P49756"/>
<dbReference type="BioGRID" id="121843">
    <property type="interactions" value="337"/>
</dbReference>
<dbReference type="CORUM" id="P49756"/>
<dbReference type="FunCoup" id="P49756">
    <property type="interactions" value="4264"/>
</dbReference>
<dbReference type="IntAct" id="P49756">
    <property type="interactions" value="115"/>
</dbReference>
<dbReference type="MINT" id="P49756"/>
<dbReference type="STRING" id="9606.ENSP00000261973"/>
<dbReference type="GlyGen" id="P49756">
    <property type="glycosylation" value="6 sites, 1 N-linked glycan (1 site), 1 O-linked glycan (5 sites)"/>
</dbReference>
<dbReference type="iPTMnet" id="P49756"/>
<dbReference type="MetOSite" id="P49756"/>
<dbReference type="PhosphoSitePlus" id="P49756"/>
<dbReference type="SwissPalm" id="P49756"/>
<dbReference type="BioMuta" id="RBM25"/>
<dbReference type="DMDM" id="226693631"/>
<dbReference type="jPOST" id="P49756"/>
<dbReference type="MassIVE" id="P49756"/>
<dbReference type="PaxDb" id="9606-ENSP00000261973"/>
<dbReference type="PeptideAtlas" id="P49756"/>
<dbReference type="ProteomicsDB" id="56071">
    <molecule id="P49756-1"/>
</dbReference>
<dbReference type="ProteomicsDB" id="56072">
    <molecule id="P49756-2"/>
</dbReference>
<dbReference type="ProteomicsDB" id="56073">
    <molecule id="P49756-3"/>
</dbReference>
<dbReference type="ProteomicsDB" id="56074">
    <molecule id="P49756-4"/>
</dbReference>
<dbReference type="Pumba" id="P49756"/>
<dbReference type="Antibodypedia" id="158">
    <property type="antibodies" value="69 antibodies from 18 providers"/>
</dbReference>
<dbReference type="DNASU" id="58517"/>
<dbReference type="Ensembl" id="ENST00000261973.12">
    <molecule id="P49756-1"/>
    <property type="protein sequence ID" value="ENSP00000261973.7"/>
    <property type="gene ID" value="ENSG00000119707.14"/>
</dbReference>
<dbReference type="Ensembl" id="ENST00000525321.5">
    <molecule id="P49756-3"/>
    <property type="protein sequence ID" value="ENSP00000436868.1"/>
    <property type="gene ID" value="ENSG00000119707.14"/>
</dbReference>
<dbReference type="Ensembl" id="ENST00000526754.5">
    <molecule id="P49756-2"/>
    <property type="protein sequence ID" value="ENSP00000436225.1"/>
    <property type="gene ID" value="ENSG00000119707.14"/>
</dbReference>
<dbReference type="Ensembl" id="ENST00000527432.5">
    <molecule id="P49756-1"/>
    <property type="protein sequence ID" value="ENSP00000431150.1"/>
    <property type="gene ID" value="ENSG00000119707.14"/>
</dbReference>
<dbReference type="Ensembl" id="ENST00000528081.5">
    <molecule id="P49756-4"/>
    <property type="protein sequence ID" value="ENSP00000434444.1"/>
    <property type="gene ID" value="ENSG00000119707.14"/>
</dbReference>
<dbReference type="GeneID" id="58517"/>
<dbReference type="KEGG" id="hsa:58517"/>
<dbReference type="MANE-Select" id="ENST00000261973.12">
    <property type="protein sequence ID" value="ENSP00000261973.7"/>
    <property type="RefSeq nucleotide sequence ID" value="NM_021239.3"/>
    <property type="RefSeq protein sequence ID" value="NP_067062.1"/>
</dbReference>
<dbReference type="UCSC" id="uc001xnn.5">
    <molecule id="P49756-1"/>
    <property type="organism name" value="human"/>
</dbReference>
<dbReference type="AGR" id="HGNC:23244"/>
<dbReference type="CTD" id="58517"/>
<dbReference type="DisGeNET" id="58517"/>
<dbReference type="GeneCards" id="RBM25"/>
<dbReference type="HGNC" id="HGNC:23244">
    <property type="gene designation" value="RBM25"/>
</dbReference>
<dbReference type="HPA" id="ENSG00000119707">
    <property type="expression patterns" value="Low tissue specificity"/>
</dbReference>
<dbReference type="MIM" id="612427">
    <property type="type" value="gene"/>
</dbReference>
<dbReference type="neXtProt" id="NX_P49756"/>
<dbReference type="OpenTargets" id="ENSG00000119707"/>
<dbReference type="PharmGKB" id="PA134912024"/>
<dbReference type="VEuPathDB" id="HostDB:ENSG00000119707"/>
<dbReference type="eggNOG" id="KOG2217">
    <property type="taxonomic scope" value="Eukaryota"/>
</dbReference>
<dbReference type="eggNOG" id="KOG2253">
    <property type="taxonomic scope" value="Eukaryota"/>
</dbReference>
<dbReference type="GeneTree" id="ENSGT00730000111019"/>
<dbReference type="HOGENOM" id="CLU_009855_0_0_1"/>
<dbReference type="InParanoid" id="P49756"/>
<dbReference type="OMA" id="DGCVNKK"/>
<dbReference type="OrthoDB" id="6275295at2759"/>
<dbReference type="PAN-GO" id="P49756">
    <property type="GO annotations" value="2 GO annotations based on evolutionary models"/>
</dbReference>
<dbReference type="PhylomeDB" id="P49756"/>
<dbReference type="TreeFam" id="TF320185"/>
<dbReference type="PathwayCommons" id="P49756"/>
<dbReference type="Reactome" id="R-HSA-72163">
    <property type="pathway name" value="mRNA Splicing - Major Pathway"/>
</dbReference>
<dbReference type="SignaLink" id="P49756"/>
<dbReference type="BioGRID-ORCS" id="58517">
    <property type="hits" value="816 hits in 1173 CRISPR screens"/>
</dbReference>
<dbReference type="CD-CODE" id="232F8A39">
    <property type="entry name" value="P-body"/>
</dbReference>
<dbReference type="CD-CODE" id="DEE660B4">
    <property type="entry name" value="Stress granule"/>
</dbReference>
<dbReference type="ChiTaRS" id="RBM25">
    <property type="organism name" value="human"/>
</dbReference>
<dbReference type="EvolutionaryTrace" id="P49756"/>
<dbReference type="GeneWiki" id="RBM25"/>
<dbReference type="GenomeRNAi" id="58517"/>
<dbReference type="Pharos" id="P49756">
    <property type="development level" value="Tbio"/>
</dbReference>
<dbReference type="PRO" id="PR:P49756"/>
<dbReference type="Proteomes" id="UP000005640">
    <property type="component" value="Chromosome 14"/>
</dbReference>
<dbReference type="RNAct" id="P49756">
    <property type="molecule type" value="protein"/>
</dbReference>
<dbReference type="Bgee" id="ENSG00000119707">
    <property type="expression patterns" value="Expressed in tendon of biceps brachii and 209 other cell types or tissues"/>
</dbReference>
<dbReference type="ExpressionAtlas" id="P49756">
    <property type="expression patterns" value="baseline and differential"/>
</dbReference>
<dbReference type="GO" id="GO:0005737">
    <property type="term" value="C:cytoplasm"/>
    <property type="evidence" value="ECO:0007669"/>
    <property type="project" value="UniProtKB-SubCell"/>
</dbReference>
<dbReference type="GO" id="GO:0016607">
    <property type="term" value="C:nuclear speck"/>
    <property type="evidence" value="ECO:0000314"/>
    <property type="project" value="HPA"/>
</dbReference>
<dbReference type="GO" id="GO:0005654">
    <property type="term" value="C:nucleoplasm"/>
    <property type="evidence" value="ECO:0000304"/>
    <property type="project" value="Reactome"/>
</dbReference>
<dbReference type="GO" id="GO:0003729">
    <property type="term" value="F:mRNA binding"/>
    <property type="evidence" value="ECO:0000314"/>
    <property type="project" value="UniProtKB"/>
</dbReference>
<dbReference type="GO" id="GO:0003723">
    <property type="term" value="F:RNA binding"/>
    <property type="evidence" value="ECO:0007005"/>
    <property type="project" value="UniProtKB"/>
</dbReference>
<dbReference type="GO" id="GO:0006397">
    <property type="term" value="P:mRNA processing"/>
    <property type="evidence" value="ECO:0007669"/>
    <property type="project" value="UniProtKB-KW"/>
</dbReference>
<dbReference type="GO" id="GO:0000381">
    <property type="term" value="P:regulation of alternative mRNA splicing, via spliceosome"/>
    <property type="evidence" value="ECO:0000314"/>
    <property type="project" value="UniProtKB"/>
</dbReference>
<dbReference type="GO" id="GO:0042981">
    <property type="term" value="P:regulation of apoptotic process"/>
    <property type="evidence" value="ECO:0000314"/>
    <property type="project" value="UniProtKB"/>
</dbReference>
<dbReference type="GO" id="GO:0008380">
    <property type="term" value="P:RNA splicing"/>
    <property type="evidence" value="ECO:0007669"/>
    <property type="project" value="UniProtKB-KW"/>
</dbReference>
<dbReference type="CDD" id="cd12446">
    <property type="entry name" value="RRM_RBM25"/>
    <property type="match status" value="1"/>
</dbReference>
<dbReference type="FunFam" id="1.20.1390.10:FF:000004">
    <property type="entry name" value="RNA-binding motif protein 25"/>
    <property type="match status" value="1"/>
</dbReference>
<dbReference type="FunFam" id="3.30.70.330:FF:000230">
    <property type="entry name" value="RNA-binding motif protein 25"/>
    <property type="match status" value="1"/>
</dbReference>
<dbReference type="Gene3D" id="3.30.70.330">
    <property type="match status" value="1"/>
</dbReference>
<dbReference type="Gene3D" id="1.20.1390.10">
    <property type="entry name" value="PWI domain"/>
    <property type="match status" value="1"/>
</dbReference>
<dbReference type="InterPro" id="IPR012677">
    <property type="entry name" value="Nucleotide-bd_a/b_plait_sf"/>
</dbReference>
<dbReference type="InterPro" id="IPR002483">
    <property type="entry name" value="PWI_dom"/>
</dbReference>
<dbReference type="InterPro" id="IPR036483">
    <property type="entry name" value="PWI_dom_sf"/>
</dbReference>
<dbReference type="InterPro" id="IPR035979">
    <property type="entry name" value="RBD_domain_sf"/>
</dbReference>
<dbReference type="InterPro" id="IPR052768">
    <property type="entry name" value="RBM25"/>
</dbReference>
<dbReference type="InterPro" id="IPR034268">
    <property type="entry name" value="RBM25_RRM"/>
</dbReference>
<dbReference type="InterPro" id="IPR000504">
    <property type="entry name" value="RRM_dom"/>
</dbReference>
<dbReference type="PANTHER" id="PTHR18806">
    <property type="entry name" value="RBM25 PROTEIN"/>
    <property type="match status" value="1"/>
</dbReference>
<dbReference type="PANTHER" id="PTHR18806:SF4">
    <property type="entry name" value="RNA-BINDING PROTEIN 25"/>
    <property type="match status" value="1"/>
</dbReference>
<dbReference type="Pfam" id="PF01480">
    <property type="entry name" value="PWI"/>
    <property type="match status" value="1"/>
</dbReference>
<dbReference type="Pfam" id="PF00076">
    <property type="entry name" value="RRM_1"/>
    <property type="match status" value="1"/>
</dbReference>
<dbReference type="SMART" id="SM00311">
    <property type="entry name" value="PWI"/>
    <property type="match status" value="1"/>
</dbReference>
<dbReference type="SMART" id="SM00360">
    <property type="entry name" value="RRM"/>
    <property type="match status" value="1"/>
</dbReference>
<dbReference type="SUPFAM" id="SSF101233">
    <property type="entry name" value="PWI domain"/>
    <property type="match status" value="1"/>
</dbReference>
<dbReference type="SUPFAM" id="SSF54928">
    <property type="entry name" value="RNA-binding domain, RBD"/>
    <property type="match status" value="1"/>
</dbReference>
<dbReference type="PROSITE" id="PS51025">
    <property type="entry name" value="PWI"/>
    <property type="match status" value="1"/>
</dbReference>
<dbReference type="PROSITE" id="PS50102">
    <property type="entry name" value="RRM"/>
    <property type="match status" value="1"/>
</dbReference>